<organism>
    <name type="scientific">Bungarus caeruleus</name>
    <name type="common">Indian krait</name>
    <dbReference type="NCBI Taxonomy" id="132961"/>
    <lineage>
        <taxon>Eukaryota</taxon>
        <taxon>Metazoa</taxon>
        <taxon>Chordata</taxon>
        <taxon>Craniata</taxon>
        <taxon>Vertebrata</taxon>
        <taxon>Euteleostomi</taxon>
        <taxon>Lepidosauria</taxon>
        <taxon>Squamata</taxon>
        <taxon>Bifurcata</taxon>
        <taxon>Unidentata</taxon>
        <taxon>Episquamata</taxon>
        <taxon>Toxicofera</taxon>
        <taxon>Serpentes</taxon>
        <taxon>Colubroidea</taxon>
        <taxon>Elapidae</taxon>
        <taxon>Bungarinae</taxon>
        <taxon>Bungarus</taxon>
    </lineage>
</organism>
<protein>
    <recommendedName>
        <fullName>Basic phospholipase A2 3</fullName>
        <shortName>svPLA2</shortName>
        <ecNumber>3.1.1.4</ecNumber>
    </recommendedName>
    <alternativeName>
        <fullName>Phosphatidylcholine 2-acylhydrolase</fullName>
    </alternativeName>
</protein>
<comment type="function">
    <text evidence="1">Snake venom phospholipase A2 (PLA2) that shows anticoagulant and neurotoxic activities. PLA2 catalyzes the calcium-dependent hydrolysis of the 2-acyl groups in 3-sn-phosphoglycerides (By similarity).</text>
</comment>
<comment type="catalytic activity">
    <reaction evidence="4 5">
        <text>a 1,2-diacyl-sn-glycero-3-phosphocholine + H2O = a 1-acyl-sn-glycero-3-phosphocholine + a fatty acid + H(+)</text>
        <dbReference type="Rhea" id="RHEA:15801"/>
        <dbReference type="ChEBI" id="CHEBI:15377"/>
        <dbReference type="ChEBI" id="CHEBI:15378"/>
        <dbReference type="ChEBI" id="CHEBI:28868"/>
        <dbReference type="ChEBI" id="CHEBI:57643"/>
        <dbReference type="ChEBI" id="CHEBI:58168"/>
        <dbReference type="EC" id="3.1.1.4"/>
    </reaction>
</comment>
<comment type="cofactor">
    <cofactor evidence="2">
        <name>Ca(2+)</name>
        <dbReference type="ChEBI" id="CHEBI:29108"/>
    </cofactor>
    <text evidence="2">Binds 1 Ca(2+) ion per subunit.</text>
</comment>
<comment type="subunit">
    <text evidence="6 7">Monomer, or homotrimer. Was firstly described as a trimer (PubMed:16508078), but has been reinterpreted with the possibility of being a monomer (PubMed:17372360).</text>
</comment>
<comment type="subcellular location">
    <subcellularLocation>
        <location>Secreted</location>
    </subcellularLocation>
</comment>
<comment type="tissue specificity">
    <text>Expressed by the venom gland.</text>
</comment>
<comment type="similarity">
    <text evidence="8">Belongs to the phospholipase A2 family. Group I subfamily. D49 sub-subfamily.</text>
</comment>
<comment type="caution">
    <text evidence="8">The PDB entry 2OSN is a reinterpretation of the PDB entry 1G2X.</text>
</comment>
<feature type="signal peptide" evidence="3">
    <location>
        <begin position="1" status="less than"/>
        <end position="11"/>
    </location>
</feature>
<feature type="propeptide" id="PRO_0000414306" evidence="1">
    <location>
        <begin position="12"/>
        <end position="19"/>
    </location>
</feature>
<feature type="chain" id="PRO_0000414307" description="Basic phospholipase A2 3">
    <location>
        <begin position="20"/>
        <end position="137"/>
    </location>
</feature>
<feature type="active site" evidence="2">
    <location>
        <position position="65"/>
    </location>
</feature>
<feature type="active site" evidence="2">
    <location>
        <position position="111"/>
    </location>
</feature>
<feature type="binding site" evidence="2">
    <location>
        <position position="45"/>
    </location>
    <ligand>
        <name>Ca(2+)</name>
        <dbReference type="ChEBI" id="CHEBI:29108"/>
    </ligand>
</feature>
<feature type="binding site" evidence="2">
    <location>
        <position position="47"/>
    </location>
    <ligand>
        <name>Ca(2+)</name>
        <dbReference type="ChEBI" id="CHEBI:29108"/>
    </ligand>
</feature>
<feature type="binding site" evidence="2">
    <location>
        <position position="49"/>
    </location>
    <ligand>
        <name>Ca(2+)</name>
        <dbReference type="ChEBI" id="CHEBI:29108"/>
    </ligand>
</feature>
<feature type="binding site" evidence="2">
    <location>
        <position position="66"/>
    </location>
    <ligand>
        <name>Ca(2+)</name>
        <dbReference type="ChEBI" id="CHEBI:29108"/>
    </ligand>
</feature>
<feature type="disulfide bond" evidence="6 7 9 10">
    <location>
        <begin position="30"/>
        <end position="89"/>
    </location>
</feature>
<feature type="disulfide bond" evidence="6 7 9 10">
    <location>
        <begin position="44"/>
        <end position="136"/>
    </location>
</feature>
<feature type="disulfide bond" evidence="6 7 9 10">
    <location>
        <begin position="46"/>
        <end position="62"/>
    </location>
</feature>
<feature type="disulfide bond" evidence="6 7 9 10">
    <location>
        <begin position="61"/>
        <end position="117"/>
    </location>
</feature>
<feature type="disulfide bond" evidence="6 7 9 10">
    <location>
        <begin position="68"/>
        <end position="110"/>
    </location>
</feature>
<feature type="disulfide bond" evidence="6 7 9 10">
    <location>
        <begin position="78"/>
        <end position="103"/>
    </location>
</feature>
<feature type="disulfide bond" evidence="6 7 9 10">
    <location>
        <begin position="96"/>
        <end position="108"/>
    </location>
</feature>
<feature type="non-terminal residue">
    <location>
        <position position="1"/>
    </location>
</feature>
<feature type="helix" evidence="11">
    <location>
        <begin position="21"/>
        <end position="31"/>
    </location>
</feature>
<feature type="helix" evidence="11">
    <location>
        <begin position="36"/>
        <end position="39"/>
    </location>
</feature>
<feature type="turn" evidence="11">
    <location>
        <begin position="43"/>
        <end position="45"/>
    </location>
</feature>
<feature type="strand" evidence="11">
    <location>
        <begin position="46"/>
        <end position="48"/>
    </location>
</feature>
<feature type="helix" evidence="11">
    <location>
        <begin position="57"/>
        <end position="72"/>
    </location>
</feature>
<feature type="turn" evidence="11">
    <location>
        <begin position="80"/>
        <end position="82"/>
    </location>
</feature>
<feature type="strand" evidence="11">
    <location>
        <begin position="87"/>
        <end position="90"/>
    </location>
</feature>
<feature type="strand" evidence="11">
    <location>
        <begin position="93"/>
        <end position="96"/>
    </location>
</feature>
<feature type="helix" evidence="11">
    <location>
        <begin position="102"/>
        <end position="120"/>
    </location>
</feature>
<feature type="helix" evidence="11">
    <location>
        <begin position="125"/>
        <end position="127"/>
    </location>
</feature>
<accession>Q6SLM0</accession>
<dbReference type="EC" id="3.1.1.4"/>
<dbReference type="EMBL" id="AY455756">
    <property type="protein sequence ID" value="AAR19229.1"/>
    <property type="molecule type" value="mRNA"/>
</dbReference>
<dbReference type="PDB" id="1G2X">
    <property type="method" value="X-ray"/>
    <property type="resolution" value="2.50 A"/>
    <property type="chains" value="A/B/C=20-137"/>
</dbReference>
<dbReference type="PDB" id="2OSN">
    <property type="method" value="X-ray"/>
    <property type="resolution" value="2.50 A"/>
    <property type="chains" value="A=20-137"/>
</dbReference>
<dbReference type="PDBsum" id="1G2X"/>
<dbReference type="PDBsum" id="2OSN"/>
<dbReference type="SMR" id="Q6SLM0"/>
<dbReference type="EvolutionaryTrace" id="Q6SLM0"/>
<dbReference type="GO" id="GO:0005576">
    <property type="term" value="C:extracellular region"/>
    <property type="evidence" value="ECO:0007669"/>
    <property type="project" value="UniProtKB-SubCell"/>
</dbReference>
<dbReference type="GO" id="GO:0005509">
    <property type="term" value="F:calcium ion binding"/>
    <property type="evidence" value="ECO:0007669"/>
    <property type="project" value="InterPro"/>
</dbReference>
<dbReference type="GO" id="GO:0047498">
    <property type="term" value="F:calcium-dependent phospholipase A2 activity"/>
    <property type="evidence" value="ECO:0007669"/>
    <property type="project" value="TreeGrafter"/>
</dbReference>
<dbReference type="GO" id="GO:0005543">
    <property type="term" value="F:phospholipid binding"/>
    <property type="evidence" value="ECO:0007669"/>
    <property type="project" value="TreeGrafter"/>
</dbReference>
<dbReference type="GO" id="GO:0090729">
    <property type="term" value="F:toxin activity"/>
    <property type="evidence" value="ECO:0007669"/>
    <property type="project" value="UniProtKB-KW"/>
</dbReference>
<dbReference type="GO" id="GO:0050482">
    <property type="term" value="P:arachidonate secretion"/>
    <property type="evidence" value="ECO:0007669"/>
    <property type="project" value="InterPro"/>
</dbReference>
<dbReference type="GO" id="GO:0016042">
    <property type="term" value="P:lipid catabolic process"/>
    <property type="evidence" value="ECO:0007669"/>
    <property type="project" value="UniProtKB-KW"/>
</dbReference>
<dbReference type="GO" id="GO:0006644">
    <property type="term" value="P:phospholipid metabolic process"/>
    <property type="evidence" value="ECO:0007669"/>
    <property type="project" value="InterPro"/>
</dbReference>
<dbReference type="CDD" id="cd00125">
    <property type="entry name" value="PLA2c"/>
    <property type="match status" value="1"/>
</dbReference>
<dbReference type="FunFam" id="1.20.90.10:FF:000007">
    <property type="entry name" value="Acidic phospholipase A2"/>
    <property type="match status" value="1"/>
</dbReference>
<dbReference type="Gene3D" id="1.20.90.10">
    <property type="entry name" value="Phospholipase A2 domain"/>
    <property type="match status" value="1"/>
</dbReference>
<dbReference type="InterPro" id="IPR001211">
    <property type="entry name" value="PLipase_A2"/>
</dbReference>
<dbReference type="InterPro" id="IPR033112">
    <property type="entry name" value="PLipase_A2_Asp_AS"/>
</dbReference>
<dbReference type="InterPro" id="IPR016090">
    <property type="entry name" value="PLipase_A2_dom"/>
</dbReference>
<dbReference type="InterPro" id="IPR036444">
    <property type="entry name" value="PLipase_A2_dom_sf"/>
</dbReference>
<dbReference type="InterPro" id="IPR033113">
    <property type="entry name" value="PLipase_A2_His_AS"/>
</dbReference>
<dbReference type="PANTHER" id="PTHR11716:SF94">
    <property type="entry name" value="PHOSPHOLIPASE A2"/>
    <property type="match status" value="1"/>
</dbReference>
<dbReference type="PANTHER" id="PTHR11716">
    <property type="entry name" value="PHOSPHOLIPASE A2 FAMILY MEMBER"/>
    <property type="match status" value="1"/>
</dbReference>
<dbReference type="Pfam" id="PF00068">
    <property type="entry name" value="Phospholip_A2_1"/>
    <property type="match status" value="1"/>
</dbReference>
<dbReference type="PRINTS" id="PR00389">
    <property type="entry name" value="PHPHLIPASEA2"/>
</dbReference>
<dbReference type="SMART" id="SM00085">
    <property type="entry name" value="PA2c"/>
    <property type="match status" value="1"/>
</dbReference>
<dbReference type="SUPFAM" id="SSF48619">
    <property type="entry name" value="Phospholipase A2, PLA2"/>
    <property type="match status" value="1"/>
</dbReference>
<dbReference type="PROSITE" id="PS00119">
    <property type="entry name" value="PA2_ASP"/>
    <property type="match status" value="1"/>
</dbReference>
<dbReference type="PROSITE" id="PS00118">
    <property type="entry name" value="PA2_HIS"/>
    <property type="match status" value="1"/>
</dbReference>
<evidence type="ECO:0000250" key="1"/>
<evidence type="ECO:0000250" key="2">
    <source>
        <dbReference type="UniProtKB" id="P14418"/>
    </source>
</evidence>
<evidence type="ECO:0000255" key="3"/>
<evidence type="ECO:0000255" key="4">
    <source>
        <dbReference type="PROSITE-ProRule" id="PRU10035"/>
    </source>
</evidence>
<evidence type="ECO:0000255" key="5">
    <source>
        <dbReference type="PROSITE-ProRule" id="PRU10036"/>
    </source>
</evidence>
<evidence type="ECO:0000269" key="6">
    <source>
    </source>
</evidence>
<evidence type="ECO:0000269" key="7">
    <source>
    </source>
</evidence>
<evidence type="ECO:0000305" key="8"/>
<evidence type="ECO:0007744" key="9">
    <source>
        <dbReference type="PDB" id="1G2X"/>
    </source>
</evidence>
<evidence type="ECO:0007744" key="10">
    <source>
        <dbReference type="PDB" id="2OSN"/>
    </source>
</evidence>
<evidence type="ECO:0007829" key="11">
    <source>
        <dbReference type="PDB" id="1G2X"/>
    </source>
</evidence>
<keyword id="KW-0002">3D-structure</keyword>
<keyword id="KW-1203">Blood coagulation cascade inhibiting toxin</keyword>
<keyword id="KW-0106">Calcium</keyword>
<keyword id="KW-1015">Disulfide bond</keyword>
<keyword id="KW-1199">Hemostasis impairing toxin</keyword>
<keyword id="KW-0378">Hydrolase</keyword>
<keyword id="KW-0442">Lipid degradation</keyword>
<keyword id="KW-0443">Lipid metabolism</keyword>
<keyword id="KW-0479">Metal-binding</keyword>
<keyword id="KW-0528">Neurotoxin</keyword>
<keyword id="KW-0638">Presynaptic neurotoxin</keyword>
<keyword id="KW-0964">Secreted</keyword>
<keyword id="KW-0732">Signal</keyword>
<keyword id="KW-0800">Toxin</keyword>
<proteinExistence type="evidence at protein level"/>
<name>PA2B3_BUNCE</name>
<sequence length="137" mass="14831">LVAVCVSLLGAANIPPQPLNLQQFKNMIQCAGTRTWTAYINYGCYCGKGGSGTPVDKLDRCCYTHDHCYNQADSIPGCNPNIKTYSYTCTQPNITCTRTADACAKFLCDCDRTAAICFASAPYNINNIMISASNSCQ</sequence>
<reference key="1">
    <citation type="journal article" date="2005" name="Acta Crystallogr. F">
        <title>Sequence-induced trimerization of phospholipase A2: structure of a trimeric isoform of PLA2 from common krait (Bungarus caeruleus) at 2.5 A resolution.</title>
        <authorList>
            <person name="Singh G."/>
            <person name="Gourinath S."/>
            <person name="Saravanan K."/>
            <person name="Sharma S."/>
            <person name="Bhanumathi S."/>
            <person name="Betzel C."/>
            <person name="Srinivasan A."/>
            <person name="Singh T.P."/>
        </authorList>
    </citation>
    <scope>NUCLEOTIDE SEQUENCE [MRNA]</scope>
    <scope>X-RAY CRYSTALLOGRAPHY (2.50 ANGSTROMS) OF 20-137 (HOMOTRIMER)</scope>
    <scope>DISULFIDE BONDS</scope>
    <source>
        <tissue>Venom</tissue>
        <tissue>Venom gland</tissue>
    </source>
</reference>
<reference key="2">
    <citation type="journal article" date="2007" name="Acta Crystallogr. D">
        <title>An alternate description of two crystal structures of phospholipase A2 from Bungarus caeruleus.</title>
        <authorList>
            <person name="Le Trong I."/>
            <person name="Stenkamp R.E."/>
        </authorList>
    </citation>
    <scope>X-RAY CRYSTALLOGRAPHY (2.50 ANGSTROMS) OF 20-137 (MONOMER)</scope>
    <scope>SUBUNIT</scope>
    <scope>DISULFIDE BONDS</scope>
</reference>